<protein>
    <recommendedName>
        <fullName evidence="1">Probable transcriptional regulatory protein LHK_02347</fullName>
    </recommendedName>
</protein>
<accession>C1DAZ0</accession>
<comment type="subcellular location">
    <subcellularLocation>
        <location evidence="1">Cytoplasm</location>
    </subcellularLocation>
</comment>
<comment type="similarity">
    <text evidence="1">Belongs to the TACO1 family.</text>
</comment>
<gene>
    <name type="ordered locus">LHK_02347</name>
</gene>
<reference key="1">
    <citation type="journal article" date="2009" name="PLoS Genet.">
        <title>The complete genome and proteome of Laribacter hongkongensis reveal potential mechanisms for adaptations to different temperatures and habitats.</title>
        <authorList>
            <person name="Woo P.C.Y."/>
            <person name="Lau S.K.P."/>
            <person name="Tse H."/>
            <person name="Teng J.L.L."/>
            <person name="Curreem S.O."/>
            <person name="Tsang A.K.L."/>
            <person name="Fan R.Y.Y."/>
            <person name="Wong G.K.M."/>
            <person name="Huang Y."/>
            <person name="Loman N.J."/>
            <person name="Snyder L.A.S."/>
            <person name="Cai J.J."/>
            <person name="Huang J.-D."/>
            <person name="Mak W."/>
            <person name="Pallen M.J."/>
            <person name="Lok S."/>
            <person name="Yuen K.-Y."/>
        </authorList>
    </citation>
    <scope>NUCLEOTIDE SEQUENCE [LARGE SCALE GENOMIC DNA]</scope>
    <source>
        <strain>HLHK9</strain>
    </source>
</reference>
<proteinExistence type="inferred from homology"/>
<keyword id="KW-0963">Cytoplasm</keyword>
<keyword id="KW-0238">DNA-binding</keyword>
<keyword id="KW-1185">Reference proteome</keyword>
<keyword id="KW-0804">Transcription</keyword>
<keyword id="KW-0805">Transcription regulation</keyword>
<sequence>MAGHSKWANIQHRKGRQDAKRGKIFTRLIKEITVAAKMGGADLGSNPRLRLAVDKAKAESMPKDNIENAIKRGAGLLDGVDYIECRYEGYGIGGAAVMVDCLTDNKTRTVADVRHAFSKFGGNMGTDGCVAFQFTHCGYLVFAPGTDEDALMEAALESGADDVVSNDDGSIEVITDPNSFSDIKDALEAKGFKAEMGEVTMRAQNETELSGDDAVRMQKLLDALEDLDDVQEVYTSAVLDA</sequence>
<feature type="chain" id="PRO_1000200098" description="Probable transcriptional regulatory protein LHK_02347">
    <location>
        <begin position="1"/>
        <end position="241"/>
    </location>
</feature>
<organism>
    <name type="scientific">Laribacter hongkongensis (strain HLHK9)</name>
    <dbReference type="NCBI Taxonomy" id="557598"/>
    <lineage>
        <taxon>Bacteria</taxon>
        <taxon>Pseudomonadati</taxon>
        <taxon>Pseudomonadota</taxon>
        <taxon>Betaproteobacteria</taxon>
        <taxon>Neisseriales</taxon>
        <taxon>Aquaspirillaceae</taxon>
        <taxon>Laribacter</taxon>
    </lineage>
</organism>
<evidence type="ECO:0000255" key="1">
    <source>
        <dbReference type="HAMAP-Rule" id="MF_00693"/>
    </source>
</evidence>
<dbReference type="EMBL" id="CP001154">
    <property type="protein sequence ID" value="ACO75329.1"/>
    <property type="molecule type" value="Genomic_DNA"/>
</dbReference>
<dbReference type="RefSeq" id="WP_012697815.1">
    <property type="nucleotide sequence ID" value="NC_012559.1"/>
</dbReference>
<dbReference type="SMR" id="C1DAZ0"/>
<dbReference type="STRING" id="557598.LHK_02347"/>
<dbReference type="KEGG" id="lhk:LHK_02347"/>
<dbReference type="eggNOG" id="COG0217">
    <property type="taxonomic scope" value="Bacteria"/>
</dbReference>
<dbReference type="HOGENOM" id="CLU_062974_2_2_4"/>
<dbReference type="Proteomes" id="UP000002010">
    <property type="component" value="Chromosome"/>
</dbReference>
<dbReference type="GO" id="GO:0005829">
    <property type="term" value="C:cytosol"/>
    <property type="evidence" value="ECO:0007669"/>
    <property type="project" value="TreeGrafter"/>
</dbReference>
<dbReference type="GO" id="GO:0003677">
    <property type="term" value="F:DNA binding"/>
    <property type="evidence" value="ECO:0007669"/>
    <property type="project" value="UniProtKB-UniRule"/>
</dbReference>
<dbReference type="GO" id="GO:0006355">
    <property type="term" value="P:regulation of DNA-templated transcription"/>
    <property type="evidence" value="ECO:0007669"/>
    <property type="project" value="UniProtKB-UniRule"/>
</dbReference>
<dbReference type="FunFam" id="1.10.10.200:FF:000001">
    <property type="entry name" value="Probable transcriptional regulatory protein YebC"/>
    <property type="match status" value="1"/>
</dbReference>
<dbReference type="FunFam" id="3.30.70.980:FF:000002">
    <property type="entry name" value="Probable transcriptional regulatory protein YebC"/>
    <property type="match status" value="1"/>
</dbReference>
<dbReference type="Gene3D" id="1.10.10.200">
    <property type="match status" value="1"/>
</dbReference>
<dbReference type="Gene3D" id="3.30.70.980">
    <property type="match status" value="2"/>
</dbReference>
<dbReference type="HAMAP" id="MF_00693">
    <property type="entry name" value="Transcrip_reg_TACO1"/>
    <property type="match status" value="1"/>
</dbReference>
<dbReference type="InterPro" id="IPR017856">
    <property type="entry name" value="Integrase-like_N"/>
</dbReference>
<dbReference type="InterPro" id="IPR048300">
    <property type="entry name" value="TACO1_YebC-like_2nd/3rd_dom"/>
</dbReference>
<dbReference type="InterPro" id="IPR049083">
    <property type="entry name" value="TACO1_YebC_N"/>
</dbReference>
<dbReference type="InterPro" id="IPR002876">
    <property type="entry name" value="Transcrip_reg_TACO1-like"/>
</dbReference>
<dbReference type="InterPro" id="IPR026564">
    <property type="entry name" value="Transcrip_reg_TACO1-like_dom3"/>
</dbReference>
<dbReference type="InterPro" id="IPR029072">
    <property type="entry name" value="YebC-like"/>
</dbReference>
<dbReference type="NCBIfam" id="NF001030">
    <property type="entry name" value="PRK00110.1"/>
    <property type="match status" value="1"/>
</dbReference>
<dbReference type="NCBIfam" id="NF009044">
    <property type="entry name" value="PRK12378.1"/>
    <property type="match status" value="1"/>
</dbReference>
<dbReference type="NCBIfam" id="TIGR01033">
    <property type="entry name" value="YebC/PmpR family DNA-binding transcriptional regulator"/>
    <property type="match status" value="1"/>
</dbReference>
<dbReference type="PANTHER" id="PTHR12532:SF6">
    <property type="entry name" value="TRANSCRIPTIONAL REGULATORY PROTEIN YEBC-RELATED"/>
    <property type="match status" value="1"/>
</dbReference>
<dbReference type="PANTHER" id="PTHR12532">
    <property type="entry name" value="TRANSLATIONAL ACTIVATOR OF CYTOCHROME C OXIDASE 1"/>
    <property type="match status" value="1"/>
</dbReference>
<dbReference type="Pfam" id="PF20772">
    <property type="entry name" value="TACO1_YebC_N"/>
    <property type="match status" value="1"/>
</dbReference>
<dbReference type="Pfam" id="PF01709">
    <property type="entry name" value="Transcrip_reg"/>
    <property type="match status" value="1"/>
</dbReference>
<dbReference type="SUPFAM" id="SSF75625">
    <property type="entry name" value="YebC-like"/>
    <property type="match status" value="1"/>
</dbReference>
<name>Y2347_LARHH</name>